<organism>
    <name type="scientific">Fowl adenovirus A serotype 1 (strain CELO / Phelps)</name>
    <name type="common">FAdV-1</name>
    <name type="synonym">Avian adenovirus gal1 (strain Phelps)</name>
    <dbReference type="NCBI Taxonomy" id="10553"/>
    <lineage>
        <taxon>Viruses</taxon>
        <taxon>Varidnaviria</taxon>
        <taxon>Bamfordvirae</taxon>
        <taxon>Preplasmiviricota</taxon>
        <taxon>Tectiliviricetes</taxon>
        <taxon>Rowavirales</taxon>
        <taxon>Adenoviridae</taxon>
        <taxon>Aviadenovirus</taxon>
        <taxon>Fowl aviadenovirus A</taxon>
    </lineage>
</organism>
<sequence length="178" mass="19219">MDPFGSSSVPPCSTSDLPEPKLYFVRLSPHAVPPVRATHGAAGYDLFSAYDIKVPARGRALVPTDLVFQFPPGCYGRIAPRSGLAAKFFIDVGAGVIDPDYRGNVSVVLFNFSESSFNIRRGDRVAQLILERIMVPELSELTQLGETDRGASGFGSTGMGAVDRNQRSVLEWLTPGSR</sequence>
<feature type="chain" id="PRO_0000182967" description="Deoxyuridine 5'-triphosphate nucleotidohydrolase">
    <location>
        <begin position="1"/>
        <end position="178"/>
    </location>
</feature>
<feature type="sequence conflict" description="In Ref. 1; AAB26434." evidence="2" ref="1">
    <original>S</original>
    <variation>F</variation>
    <location>
        <position position="156"/>
    </location>
</feature>
<reference key="1">
    <citation type="journal article" date="1992" name="Mol. Genet. Mikrobiol. Virusol.">
        <title>Analysis of the nucleotide sequence of a fragment (92-100%) of the CELO avian adenovirus genome.</title>
        <authorList>
            <person name="Akopian T.A."/>
            <person name="Kaverina E.N."/>
            <person name="Naroditskii B.S."/>
            <person name="Tikhonenko T.I."/>
        </authorList>
    </citation>
    <scope>NUCLEOTIDE SEQUENCE [GENOMIC DNA]</scope>
</reference>
<reference key="2">
    <citation type="journal article" date="1996" name="J. Virol.">
        <title>The complete DNA sequence and genomic organization of the avian adenovirus CELO.</title>
        <authorList>
            <person name="Chiocca S."/>
            <person name="Kurzbauer R."/>
            <person name="Schaffner G."/>
            <person name="Baker A."/>
            <person name="Mautner V."/>
            <person name="Cotten M."/>
        </authorList>
    </citation>
    <scope>NUCLEOTIDE SEQUENCE [LARGE SCALE GENOMIC DNA]</scope>
</reference>
<protein>
    <recommendedName>
        <fullName>Deoxyuridine 5'-triphosphate nucleotidohydrolase</fullName>
        <shortName>dUTPase</shortName>
        <ecNumber>3.6.1.23</ecNumber>
    </recommendedName>
    <alternativeName>
        <fullName>dUTP pyrophosphatase</fullName>
    </alternativeName>
</protein>
<accession>Q89662</accession>
<accession>Q86612</accession>
<dbReference type="EC" id="3.6.1.23"/>
<dbReference type="EMBL" id="Z17216">
    <property type="protein sequence ID" value="CAA78921.1"/>
    <property type="molecule type" value="Genomic_DNA"/>
</dbReference>
<dbReference type="EMBL" id="S61107">
    <property type="protein sequence ID" value="AAB26434.1"/>
    <property type="molecule type" value="Genomic_DNA"/>
</dbReference>
<dbReference type="EMBL" id="U46933">
    <property type="protein sequence ID" value="AAC54895.1"/>
    <property type="molecule type" value="Genomic_DNA"/>
</dbReference>
<dbReference type="PIR" id="S26429">
    <property type="entry name" value="S26429"/>
</dbReference>
<dbReference type="RefSeq" id="NP_043869.1">
    <property type="nucleotide sequence ID" value="NC_001720.1"/>
</dbReference>
<dbReference type="SMR" id="Q89662"/>
<dbReference type="KEGG" id="vg:1733464"/>
<dbReference type="UniPathway" id="UPA00610">
    <property type="reaction ID" value="UER00666"/>
</dbReference>
<dbReference type="Proteomes" id="UP000001594">
    <property type="component" value="Segment"/>
</dbReference>
<dbReference type="GO" id="GO:0004170">
    <property type="term" value="F:dUTP diphosphatase activity"/>
    <property type="evidence" value="ECO:0007669"/>
    <property type="project" value="UniProtKB-EC"/>
</dbReference>
<dbReference type="GO" id="GO:0000287">
    <property type="term" value="F:magnesium ion binding"/>
    <property type="evidence" value="ECO:0007669"/>
    <property type="project" value="InterPro"/>
</dbReference>
<dbReference type="GO" id="GO:0006226">
    <property type="term" value="P:dUMP biosynthetic process"/>
    <property type="evidence" value="ECO:0007669"/>
    <property type="project" value="UniProtKB-UniPathway"/>
</dbReference>
<dbReference type="GO" id="GO:0046081">
    <property type="term" value="P:dUTP catabolic process"/>
    <property type="evidence" value="ECO:0007669"/>
    <property type="project" value="InterPro"/>
</dbReference>
<dbReference type="CDD" id="cd07557">
    <property type="entry name" value="trimeric_dUTPase"/>
    <property type="match status" value="1"/>
</dbReference>
<dbReference type="FunFam" id="2.70.40.10:FF:000004">
    <property type="entry name" value="Deoxyuridine triphosphatase"/>
    <property type="match status" value="1"/>
</dbReference>
<dbReference type="Gene3D" id="2.70.40.10">
    <property type="match status" value="1"/>
</dbReference>
<dbReference type="InterPro" id="IPR008181">
    <property type="entry name" value="dUTPase"/>
</dbReference>
<dbReference type="InterPro" id="IPR029054">
    <property type="entry name" value="dUTPase-like"/>
</dbReference>
<dbReference type="InterPro" id="IPR036157">
    <property type="entry name" value="dUTPase-like_sf"/>
</dbReference>
<dbReference type="InterPro" id="IPR033704">
    <property type="entry name" value="dUTPase_trimeric"/>
</dbReference>
<dbReference type="NCBIfam" id="TIGR00576">
    <property type="entry name" value="dut"/>
    <property type="match status" value="1"/>
</dbReference>
<dbReference type="NCBIfam" id="NF001862">
    <property type="entry name" value="PRK00601.1"/>
    <property type="match status" value="1"/>
</dbReference>
<dbReference type="PANTHER" id="PTHR11241">
    <property type="entry name" value="DEOXYURIDINE 5'-TRIPHOSPHATE NUCLEOTIDOHYDROLASE"/>
    <property type="match status" value="1"/>
</dbReference>
<dbReference type="PANTHER" id="PTHR11241:SF0">
    <property type="entry name" value="DEOXYURIDINE 5'-TRIPHOSPHATE NUCLEOTIDOHYDROLASE"/>
    <property type="match status" value="1"/>
</dbReference>
<dbReference type="Pfam" id="PF00692">
    <property type="entry name" value="dUTPase"/>
    <property type="match status" value="1"/>
</dbReference>
<dbReference type="SUPFAM" id="SSF51283">
    <property type="entry name" value="dUTPase-like"/>
    <property type="match status" value="1"/>
</dbReference>
<organismHost>
    <name type="scientific">Galliformes</name>
    <dbReference type="NCBI Taxonomy" id="8976"/>
</organismHost>
<comment type="function">
    <text evidence="1">This enzyme is involved in nucleotide metabolism: it produces dUMP, the immediate precursor of thymidine nucleotides and it decreases the intracellular concentration of dUTP so that uracil cannot be incorporated into DNA.</text>
</comment>
<comment type="catalytic activity">
    <reaction>
        <text>dUTP + H2O = dUMP + diphosphate + H(+)</text>
        <dbReference type="Rhea" id="RHEA:10248"/>
        <dbReference type="ChEBI" id="CHEBI:15377"/>
        <dbReference type="ChEBI" id="CHEBI:15378"/>
        <dbReference type="ChEBI" id="CHEBI:33019"/>
        <dbReference type="ChEBI" id="CHEBI:61555"/>
        <dbReference type="ChEBI" id="CHEBI:246422"/>
        <dbReference type="EC" id="3.6.1.23"/>
    </reaction>
</comment>
<comment type="cofactor">
    <cofactor evidence="1">
        <name>Mg(2+)</name>
        <dbReference type="ChEBI" id="CHEBI:18420"/>
    </cofactor>
</comment>
<comment type="pathway">
    <text>Pyrimidine metabolism; dUMP biosynthesis; dUMP from dCTP (dUTP route): step 2/2.</text>
</comment>
<comment type="similarity">
    <text evidence="2">Belongs to the dUTPase family.</text>
</comment>
<evidence type="ECO:0000250" key="1"/>
<evidence type="ECO:0000305" key="2"/>
<proteinExistence type="inferred from homology"/>
<name>DUT_ADEG1</name>
<keyword id="KW-0378">Hydrolase</keyword>
<keyword id="KW-0460">Magnesium</keyword>
<keyword id="KW-0479">Metal-binding</keyword>
<keyword id="KW-0546">Nucleotide metabolism</keyword>
<keyword id="KW-1185">Reference proteome</keyword>
<gene>
    <name type="ORF">1</name>
</gene>